<reference key="1">
    <citation type="submission" date="2008-08" db="EMBL/GenBank/DDBJ databases">
        <title>Complete sequence of Acidithiobacillus ferrooxidans ATCC 53993.</title>
        <authorList>
            <person name="Lucas S."/>
            <person name="Copeland A."/>
            <person name="Lapidus A."/>
            <person name="Glavina del Rio T."/>
            <person name="Dalin E."/>
            <person name="Tice H."/>
            <person name="Bruce D."/>
            <person name="Goodwin L."/>
            <person name="Pitluck S."/>
            <person name="Sims D."/>
            <person name="Brettin T."/>
            <person name="Detter J.C."/>
            <person name="Han C."/>
            <person name="Kuske C.R."/>
            <person name="Larimer F."/>
            <person name="Land M."/>
            <person name="Hauser L."/>
            <person name="Kyrpides N."/>
            <person name="Lykidis A."/>
            <person name="Borole A.P."/>
        </authorList>
    </citation>
    <scope>NUCLEOTIDE SEQUENCE [LARGE SCALE GENOMIC DNA]</scope>
    <source>
        <strain>ATCC 53993 / BNL-5-31</strain>
    </source>
</reference>
<name>HIS6_ACIF5</name>
<accession>B5EQF2</accession>
<proteinExistence type="inferred from homology"/>
<gene>
    <name evidence="1" type="primary">hisF</name>
    <name type="ordered locus">Lferr_2655</name>
</gene>
<organism>
    <name type="scientific">Acidithiobacillus ferrooxidans (strain ATCC 53993 / BNL-5-31)</name>
    <name type="common">Leptospirillum ferrooxidans (ATCC 53993)</name>
    <dbReference type="NCBI Taxonomy" id="380394"/>
    <lineage>
        <taxon>Bacteria</taxon>
        <taxon>Pseudomonadati</taxon>
        <taxon>Pseudomonadota</taxon>
        <taxon>Acidithiobacillia</taxon>
        <taxon>Acidithiobacillales</taxon>
        <taxon>Acidithiobacillaceae</taxon>
        <taxon>Acidithiobacillus</taxon>
    </lineage>
</organism>
<evidence type="ECO:0000255" key="1">
    <source>
        <dbReference type="HAMAP-Rule" id="MF_01013"/>
    </source>
</evidence>
<sequence>MLASRVIPCLDIDHGRVVKGVQFVALRDAGDPVEVAKRYNDEGADEITFLDISASYEERGTLADMVSAVAAQVFIPLTVGGGVRCVEDIRTLLLAGADKVSINSAAVNDPELVRAAARRFGNSCIVVAIDAKRVEDHWEVFTHGGRRGTGLDAVAWAQRMAAYGAGEILLTSMDRDGTGIGFDLALTRAISDAVPVPVIASGGVGEIRHFVEGIQQGRADAVLAASVFHFGQFRISEVKARMAAAGIPVRTTR</sequence>
<comment type="function">
    <text evidence="1">IGPS catalyzes the conversion of PRFAR and glutamine to IGP, AICAR and glutamate. The HisF subunit catalyzes the cyclization activity that produces IGP and AICAR from PRFAR using the ammonia provided by the HisH subunit.</text>
</comment>
<comment type="catalytic activity">
    <reaction evidence="1">
        <text>5-[(5-phospho-1-deoxy-D-ribulos-1-ylimino)methylamino]-1-(5-phospho-beta-D-ribosyl)imidazole-4-carboxamide + L-glutamine = D-erythro-1-(imidazol-4-yl)glycerol 3-phosphate + 5-amino-1-(5-phospho-beta-D-ribosyl)imidazole-4-carboxamide + L-glutamate + H(+)</text>
        <dbReference type="Rhea" id="RHEA:24793"/>
        <dbReference type="ChEBI" id="CHEBI:15378"/>
        <dbReference type="ChEBI" id="CHEBI:29985"/>
        <dbReference type="ChEBI" id="CHEBI:58278"/>
        <dbReference type="ChEBI" id="CHEBI:58359"/>
        <dbReference type="ChEBI" id="CHEBI:58475"/>
        <dbReference type="ChEBI" id="CHEBI:58525"/>
        <dbReference type="EC" id="4.3.2.10"/>
    </reaction>
</comment>
<comment type="pathway">
    <text evidence="1">Amino-acid biosynthesis; L-histidine biosynthesis; L-histidine from 5-phospho-alpha-D-ribose 1-diphosphate: step 5/9.</text>
</comment>
<comment type="subunit">
    <text evidence="1">Heterodimer of HisH and HisF.</text>
</comment>
<comment type="subcellular location">
    <subcellularLocation>
        <location evidence="1">Cytoplasm</location>
    </subcellularLocation>
</comment>
<comment type="similarity">
    <text evidence="1">Belongs to the HisA/HisF family.</text>
</comment>
<dbReference type="EC" id="4.3.2.10" evidence="1"/>
<dbReference type="EMBL" id="CP001132">
    <property type="protein sequence ID" value="ACH84849.1"/>
    <property type="molecule type" value="Genomic_DNA"/>
</dbReference>
<dbReference type="RefSeq" id="WP_012537568.1">
    <property type="nucleotide sequence ID" value="NC_011206.1"/>
</dbReference>
<dbReference type="SMR" id="B5EQF2"/>
<dbReference type="KEGG" id="afe:Lferr_2655"/>
<dbReference type="eggNOG" id="COG0107">
    <property type="taxonomic scope" value="Bacteria"/>
</dbReference>
<dbReference type="HOGENOM" id="CLU_048577_4_0_6"/>
<dbReference type="UniPathway" id="UPA00031">
    <property type="reaction ID" value="UER00010"/>
</dbReference>
<dbReference type="GO" id="GO:0005737">
    <property type="term" value="C:cytoplasm"/>
    <property type="evidence" value="ECO:0007669"/>
    <property type="project" value="UniProtKB-SubCell"/>
</dbReference>
<dbReference type="GO" id="GO:0000107">
    <property type="term" value="F:imidazoleglycerol-phosphate synthase activity"/>
    <property type="evidence" value="ECO:0007669"/>
    <property type="project" value="UniProtKB-UniRule"/>
</dbReference>
<dbReference type="GO" id="GO:0016829">
    <property type="term" value="F:lyase activity"/>
    <property type="evidence" value="ECO:0007669"/>
    <property type="project" value="UniProtKB-KW"/>
</dbReference>
<dbReference type="GO" id="GO:0000105">
    <property type="term" value="P:L-histidine biosynthetic process"/>
    <property type="evidence" value="ECO:0007669"/>
    <property type="project" value="UniProtKB-UniRule"/>
</dbReference>
<dbReference type="CDD" id="cd04731">
    <property type="entry name" value="HisF"/>
    <property type="match status" value="1"/>
</dbReference>
<dbReference type="FunFam" id="3.20.20.70:FF:000006">
    <property type="entry name" value="Imidazole glycerol phosphate synthase subunit HisF"/>
    <property type="match status" value="1"/>
</dbReference>
<dbReference type="Gene3D" id="3.20.20.70">
    <property type="entry name" value="Aldolase class I"/>
    <property type="match status" value="1"/>
</dbReference>
<dbReference type="HAMAP" id="MF_01013">
    <property type="entry name" value="HisF"/>
    <property type="match status" value="1"/>
</dbReference>
<dbReference type="InterPro" id="IPR013785">
    <property type="entry name" value="Aldolase_TIM"/>
</dbReference>
<dbReference type="InterPro" id="IPR006062">
    <property type="entry name" value="His_biosynth"/>
</dbReference>
<dbReference type="InterPro" id="IPR004651">
    <property type="entry name" value="HisF"/>
</dbReference>
<dbReference type="InterPro" id="IPR050064">
    <property type="entry name" value="IGPS_HisA/HisF"/>
</dbReference>
<dbReference type="InterPro" id="IPR011060">
    <property type="entry name" value="RibuloseP-bd_barrel"/>
</dbReference>
<dbReference type="NCBIfam" id="TIGR00735">
    <property type="entry name" value="hisF"/>
    <property type="match status" value="1"/>
</dbReference>
<dbReference type="PANTHER" id="PTHR21235:SF2">
    <property type="entry name" value="IMIDAZOLE GLYCEROL PHOSPHATE SYNTHASE HISHF"/>
    <property type="match status" value="1"/>
</dbReference>
<dbReference type="PANTHER" id="PTHR21235">
    <property type="entry name" value="IMIDAZOLE GLYCEROL PHOSPHATE SYNTHASE SUBUNIT HISF/H IGP SYNTHASE SUBUNIT HISF/H"/>
    <property type="match status" value="1"/>
</dbReference>
<dbReference type="Pfam" id="PF00977">
    <property type="entry name" value="His_biosynth"/>
    <property type="match status" value="1"/>
</dbReference>
<dbReference type="SUPFAM" id="SSF51366">
    <property type="entry name" value="Ribulose-phoshate binding barrel"/>
    <property type="match status" value="1"/>
</dbReference>
<feature type="chain" id="PRO_1000134957" description="Imidazole glycerol phosphate synthase subunit HisF">
    <location>
        <begin position="1"/>
        <end position="253"/>
    </location>
</feature>
<feature type="active site" evidence="1">
    <location>
        <position position="11"/>
    </location>
</feature>
<feature type="active site" evidence="1">
    <location>
        <position position="130"/>
    </location>
</feature>
<keyword id="KW-0028">Amino-acid biosynthesis</keyword>
<keyword id="KW-0963">Cytoplasm</keyword>
<keyword id="KW-0368">Histidine biosynthesis</keyword>
<keyword id="KW-0456">Lyase</keyword>
<protein>
    <recommendedName>
        <fullName evidence="1">Imidazole glycerol phosphate synthase subunit HisF</fullName>
        <ecNumber evidence="1">4.3.2.10</ecNumber>
    </recommendedName>
    <alternativeName>
        <fullName evidence="1">IGP synthase cyclase subunit</fullName>
    </alternativeName>
    <alternativeName>
        <fullName evidence="1">IGP synthase subunit HisF</fullName>
    </alternativeName>
    <alternativeName>
        <fullName evidence="1">ImGP synthase subunit HisF</fullName>
        <shortName evidence="1">IGPS subunit HisF</shortName>
    </alternativeName>
</protein>